<evidence type="ECO:0000250" key="1"/>
<evidence type="ECO:0000255" key="2"/>
<comment type="subcellular location">
    <subcellularLocation>
        <location evidence="1">Cell inner membrane</location>
        <topology evidence="1">Multi-pass membrane protein</topology>
    </subcellularLocation>
</comment>
<keyword id="KW-0997">Cell inner membrane</keyword>
<keyword id="KW-1003">Cell membrane</keyword>
<keyword id="KW-0472">Membrane</keyword>
<keyword id="KW-1185">Reference proteome</keyword>
<keyword id="KW-0812">Transmembrane</keyword>
<keyword id="KW-1133">Transmembrane helix</keyword>
<proteinExistence type="inferred from homology"/>
<dbReference type="EMBL" id="AE014075">
    <property type="protein sequence ID" value="AAN79347.1"/>
    <property type="molecule type" value="Genomic_DNA"/>
</dbReference>
<dbReference type="RefSeq" id="WP_000871982.1">
    <property type="nucleotide sequence ID" value="NZ_CP051263.1"/>
</dbReference>
<dbReference type="STRING" id="199310.c0874"/>
<dbReference type="TCDB" id="9.B.15.1.1">
    <property type="family name" value="the 4 tms ybhq (ybhq) family"/>
</dbReference>
<dbReference type="KEGG" id="ecc:c0874"/>
<dbReference type="eggNOG" id="ENOG502ZPQP">
    <property type="taxonomic scope" value="Bacteria"/>
</dbReference>
<dbReference type="HOGENOM" id="CLU_147415_0_0_6"/>
<dbReference type="BioCyc" id="ECOL199310:C0874-MONOMER"/>
<dbReference type="Proteomes" id="UP000001410">
    <property type="component" value="Chromosome"/>
</dbReference>
<dbReference type="GO" id="GO:0005886">
    <property type="term" value="C:plasma membrane"/>
    <property type="evidence" value="ECO:0007669"/>
    <property type="project" value="UniProtKB-SubCell"/>
</dbReference>
<dbReference type="InterPro" id="IPR021303">
    <property type="entry name" value="Uncharacterised_YbhQ"/>
</dbReference>
<dbReference type="Pfam" id="PF11076">
    <property type="entry name" value="YbhQ"/>
    <property type="match status" value="1"/>
</dbReference>
<sequence>MKWQQRVRVATGLSCWQIMLHLLVVALLVVGWMSKTLVHVGVGLCALYCVTVVMMLVFQRHPEQRWREVADVLEELTTTWYFGAALIVLWLLSRVLENNFLLAIAGLAILAGPAVVSLLAKDKKLHHLTSKHRVRR</sequence>
<accession>P0AAW6</accession>
<accession>P75773</accession>
<name>YBHQ_ECOL6</name>
<gene>
    <name type="primary">ybhQ</name>
    <name type="ordered locus">c0874</name>
</gene>
<protein>
    <recommendedName>
        <fullName>Inner membrane protein YbhQ</fullName>
    </recommendedName>
</protein>
<reference key="1">
    <citation type="journal article" date="2002" name="Proc. Natl. Acad. Sci. U.S.A.">
        <title>Extensive mosaic structure revealed by the complete genome sequence of uropathogenic Escherichia coli.</title>
        <authorList>
            <person name="Welch R.A."/>
            <person name="Burland V."/>
            <person name="Plunkett G. III"/>
            <person name="Redford P."/>
            <person name="Roesch P."/>
            <person name="Rasko D."/>
            <person name="Buckles E.L."/>
            <person name="Liou S.-R."/>
            <person name="Boutin A."/>
            <person name="Hackett J."/>
            <person name="Stroud D."/>
            <person name="Mayhew G.F."/>
            <person name="Rose D.J."/>
            <person name="Zhou S."/>
            <person name="Schwartz D.C."/>
            <person name="Perna N.T."/>
            <person name="Mobley H.L.T."/>
            <person name="Donnenberg M.S."/>
            <person name="Blattner F.R."/>
        </authorList>
    </citation>
    <scope>NUCLEOTIDE SEQUENCE [LARGE SCALE GENOMIC DNA]</scope>
    <source>
        <strain>CFT073 / ATCC 700928 / UPEC</strain>
    </source>
</reference>
<organism>
    <name type="scientific">Escherichia coli O6:H1 (strain CFT073 / ATCC 700928 / UPEC)</name>
    <dbReference type="NCBI Taxonomy" id="199310"/>
    <lineage>
        <taxon>Bacteria</taxon>
        <taxon>Pseudomonadati</taxon>
        <taxon>Pseudomonadota</taxon>
        <taxon>Gammaproteobacteria</taxon>
        <taxon>Enterobacterales</taxon>
        <taxon>Enterobacteriaceae</taxon>
        <taxon>Escherichia</taxon>
    </lineage>
</organism>
<feature type="chain" id="PRO_0000168722" description="Inner membrane protein YbhQ">
    <location>
        <begin position="1"/>
        <end position="136"/>
    </location>
</feature>
<feature type="topological domain" description="Cytoplasmic" evidence="2">
    <location>
        <begin position="1"/>
        <end position="12"/>
    </location>
</feature>
<feature type="transmembrane region" description="Helical" evidence="2">
    <location>
        <begin position="13"/>
        <end position="33"/>
    </location>
</feature>
<feature type="topological domain" description="Periplasmic" evidence="2">
    <location>
        <begin position="34"/>
        <end position="37"/>
    </location>
</feature>
<feature type="transmembrane region" description="Helical" evidence="2">
    <location>
        <begin position="38"/>
        <end position="58"/>
    </location>
</feature>
<feature type="topological domain" description="Cytoplasmic" evidence="2">
    <location>
        <begin position="59"/>
        <end position="71"/>
    </location>
</feature>
<feature type="transmembrane region" description="Helical" evidence="2">
    <location>
        <begin position="72"/>
        <end position="92"/>
    </location>
</feature>
<feature type="topological domain" description="Periplasmic" evidence="2">
    <location>
        <begin position="93"/>
        <end position="99"/>
    </location>
</feature>
<feature type="transmembrane region" description="Helical" evidence="2">
    <location>
        <begin position="100"/>
        <end position="120"/>
    </location>
</feature>
<feature type="topological domain" description="Cytoplasmic" evidence="2">
    <location>
        <begin position="121"/>
        <end position="136"/>
    </location>
</feature>